<dbReference type="EMBL" id="CP000884">
    <property type="protein sequence ID" value="ABX33036.1"/>
    <property type="molecule type" value="Genomic_DNA"/>
</dbReference>
<dbReference type="RefSeq" id="WP_003059431.1">
    <property type="nucleotide sequence ID" value="NC_010002.1"/>
</dbReference>
<dbReference type="SMR" id="A9BPR7"/>
<dbReference type="STRING" id="398578.Daci_0390"/>
<dbReference type="GeneID" id="94689732"/>
<dbReference type="KEGG" id="dac:Daci_0390"/>
<dbReference type="eggNOG" id="COG0051">
    <property type="taxonomic scope" value="Bacteria"/>
</dbReference>
<dbReference type="HOGENOM" id="CLU_122625_1_3_4"/>
<dbReference type="Proteomes" id="UP000000784">
    <property type="component" value="Chromosome"/>
</dbReference>
<dbReference type="GO" id="GO:1990904">
    <property type="term" value="C:ribonucleoprotein complex"/>
    <property type="evidence" value="ECO:0007669"/>
    <property type="project" value="UniProtKB-KW"/>
</dbReference>
<dbReference type="GO" id="GO:0005840">
    <property type="term" value="C:ribosome"/>
    <property type="evidence" value="ECO:0007669"/>
    <property type="project" value="UniProtKB-KW"/>
</dbReference>
<dbReference type="GO" id="GO:0003735">
    <property type="term" value="F:structural constituent of ribosome"/>
    <property type="evidence" value="ECO:0007669"/>
    <property type="project" value="InterPro"/>
</dbReference>
<dbReference type="GO" id="GO:0000049">
    <property type="term" value="F:tRNA binding"/>
    <property type="evidence" value="ECO:0007669"/>
    <property type="project" value="UniProtKB-UniRule"/>
</dbReference>
<dbReference type="GO" id="GO:0006412">
    <property type="term" value="P:translation"/>
    <property type="evidence" value="ECO:0007669"/>
    <property type="project" value="UniProtKB-UniRule"/>
</dbReference>
<dbReference type="FunFam" id="3.30.70.600:FF:000001">
    <property type="entry name" value="30S ribosomal protein S10"/>
    <property type="match status" value="1"/>
</dbReference>
<dbReference type="Gene3D" id="3.30.70.600">
    <property type="entry name" value="Ribosomal protein S10 domain"/>
    <property type="match status" value="1"/>
</dbReference>
<dbReference type="HAMAP" id="MF_00508">
    <property type="entry name" value="Ribosomal_uS10"/>
    <property type="match status" value="1"/>
</dbReference>
<dbReference type="InterPro" id="IPR001848">
    <property type="entry name" value="Ribosomal_uS10"/>
</dbReference>
<dbReference type="InterPro" id="IPR018268">
    <property type="entry name" value="Ribosomal_uS10_CS"/>
</dbReference>
<dbReference type="InterPro" id="IPR027486">
    <property type="entry name" value="Ribosomal_uS10_dom"/>
</dbReference>
<dbReference type="InterPro" id="IPR036838">
    <property type="entry name" value="Ribosomal_uS10_dom_sf"/>
</dbReference>
<dbReference type="NCBIfam" id="NF001861">
    <property type="entry name" value="PRK00596.1"/>
    <property type="match status" value="1"/>
</dbReference>
<dbReference type="NCBIfam" id="TIGR01049">
    <property type="entry name" value="rpsJ_bact"/>
    <property type="match status" value="1"/>
</dbReference>
<dbReference type="PANTHER" id="PTHR11700">
    <property type="entry name" value="30S RIBOSOMAL PROTEIN S10 FAMILY MEMBER"/>
    <property type="match status" value="1"/>
</dbReference>
<dbReference type="Pfam" id="PF00338">
    <property type="entry name" value="Ribosomal_S10"/>
    <property type="match status" value="1"/>
</dbReference>
<dbReference type="PRINTS" id="PR00971">
    <property type="entry name" value="RIBOSOMALS10"/>
</dbReference>
<dbReference type="SMART" id="SM01403">
    <property type="entry name" value="Ribosomal_S10"/>
    <property type="match status" value="1"/>
</dbReference>
<dbReference type="SUPFAM" id="SSF54999">
    <property type="entry name" value="Ribosomal protein S10"/>
    <property type="match status" value="1"/>
</dbReference>
<dbReference type="PROSITE" id="PS00361">
    <property type="entry name" value="RIBOSOMAL_S10"/>
    <property type="match status" value="1"/>
</dbReference>
<protein>
    <recommendedName>
        <fullName evidence="1">Small ribosomal subunit protein uS10</fullName>
    </recommendedName>
    <alternativeName>
        <fullName evidence="2">30S ribosomal protein S10</fullName>
    </alternativeName>
</protein>
<comment type="function">
    <text evidence="1">Involved in the binding of tRNA to the ribosomes.</text>
</comment>
<comment type="subunit">
    <text evidence="1">Part of the 30S ribosomal subunit.</text>
</comment>
<comment type="similarity">
    <text evidence="1">Belongs to the universal ribosomal protein uS10 family.</text>
</comment>
<name>RS10_DELAS</name>
<organism>
    <name type="scientific">Delftia acidovorans (strain DSM 14801 / SPH-1)</name>
    <dbReference type="NCBI Taxonomy" id="398578"/>
    <lineage>
        <taxon>Bacteria</taxon>
        <taxon>Pseudomonadati</taxon>
        <taxon>Pseudomonadota</taxon>
        <taxon>Betaproteobacteria</taxon>
        <taxon>Burkholderiales</taxon>
        <taxon>Comamonadaceae</taxon>
        <taxon>Delftia</taxon>
    </lineage>
</organism>
<gene>
    <name evidence="1" type="primary">rpsJ</name>
    <name type="ordered locus">Daci_0390</name>
</gene>
<evidence type="ECO:0000255" key="1">
    <source>
        <dbReference type="HAMAP-Rule" id="MF_00508"/>
    </source>
</evidence>
<evidence type="ECO:0000305" key="2"/>
<sequence>MSKQKIRIRLKAFDYKLIDQSAAEIVDTAKRTGAIVKGPVPLPTRMKRFDILRSPHVNKTSRDQFEIRTHQRLMDIVDPTDKTVDALMKLDLPAGVDVEIKLQ</sequence>
<reference key="1">
    <citation type="submission" date="2007-11" db="EMBL/GenBank/DDBJ databases">
        <title>Complete sequence of Delftia acidovorans DSM 14801 / SPH-1.</title>
        <authorList>
            <person name="Copeland A."/>
            <person name="Lucas S."/>
            <person name="Lapidus A."/>
            <person name="Barry K."/>
            <person name="Glavina del Rio T."/>
            <person name="Dalin E."/>
            <person name="Tice H."/>
            <person name="Pitluck S."/>
            <person name="Lowry S."/>
            <person name="Clum A."/>
            <person name="Schmutz J."/>
            <person name="Larimer F."/>
            <person name="Land M."/>
            <person name="Hauser L."/>
            <person name="Kyrpides N."/>
            <person name="Kim E."/>
            <person name="Schleheck D."/>
            <person name="Richardson P."/>
        </authorList>
    </citation>
    <scope>NUCLEOTIDE SEQUENCE [LARGE SCALE GENOMIC DNA]</scope>
    <source>
        <strain>DSM 14801 / SPH-1</strain>
    </source>
</reference>
<proteinExistence type="inferred from homology"/>
<feature type="chain" id="PRO_1000127112" description="Small ribosomal subunit protein uS10">
    <location>
        <begin position="1"/>
        <end position="103"/>
    </location>
</feature>
<keyword id="KW-1185">Reference proteome</keyword>
<keyword id="KW-0687">Ribonucleoprotein</keyword>
<keyword id="KW-0689">Ribosomal protein</keyword>
<accession>A9BPR7</accession>